<feature type="chain" id="PRO_0000079950" description="Replicative helicase loading/DNA remodeling protein DnaB">
    <location>
        <begin position="1"/>
        <end position="472"/>
    </location>
</feature>
<feature type="region of interest" description="DDBH1" evidence="22">
    <location>
        <begin position="1"/>
        <end position="112"/>
    </location>
</feature>
<feature type="region of interest" description="DDBH2-1" evidence="22">
    <location>
        <begin position="210"/>
        <end position="302"/>
    </location>
</feature>
<feature type="region of interest" description="DDBH2-2" evidence="22 23">
    <location>
        <begin position="303"/>
        <end position="411"/>
    </location>
</feature>
<feature type="region of interest" description="Disordered" evidence="1">
    <location>
        <begin position="415"/>
        <end position="472"/>
    </location>
</feature>
<feature type="compositionally biased region" description="Basic and acidic residues" evidence="1">
    <location>
        <begin position="421"/>
        <end position="437"/>
    </location>
</feature>
<feature type="compositionally biased region" description="Basic and acidic residues" evidence="1">
    <location>
        <begin position="448"/>
        <end position="465"/>
    </location>
</feature>
<feature type="mutagenesis site" description="In strain dnaB134; temperature-sensitive for growth. Loss of association of DnaC with oriC at 52 degrees Celsius." evidence="6 9">
    <original>K</original>
    <variation>E</variation>
    <location>
        <position position="85"/>
    </location>
</feature>
<feature type="mutagenesis site" description="In dna-1; temperature-sensitive, chromosome inititation is lost, origin region and plasmid no longer associate with cell membrane at 45 degrees Celsius. In dnaBI; required for chromosome and plasmid replication." evidence="12 16">
    <original>P</original>
    <variation>L</variation>
    <location>
        <position position="113"/>
    </location>
</feature>
<feature type="mutagenesis site" description="In dnaB27; impairs chromosome replication initiation, the effect is reversible." evidence="11">
    <original>D</original>
    <variation>E</variation>
    <location>
        <position position="122"/>
    </location>
</feature>
<feature type="mutagenesis site" description="In dnaB75, also called DnaBS371P; suppresses a deletion of priA, restores plasmid replication, loads DnaC helicase aspecifically, increased affinity for forked DNA. Suppresses dnaB134 and dnaD23 temperature-sensitive mutations, allows detection of DnaB-DnaD interaction, overexpression alters control of replication initiation. Suppresses temperature sensitivity of dnaD23 at 51 degrees Celsius without changing levels of DnaD protein, 50-fold increased ssDNA-binding." evidence="4 5 6 7">
    <original>S</original>
    <variation>P</variation>
    <location>
        <position position="371"/>
    </location>
</feature>
<feature type="mutagenesis site" description="Improved binding of phiX174 ssDNA, increased oligomerization." evidence="13">
    <original>Y</original>
    <variation>A</variation>
    <location>
        <position position="374"/>
    </location>
</feature>
<feature type="mutagenesis site" description="Improved binding of phiX174 ssDNA, slightly decreased dsDNA binding, greatly increased oligomerization." evidence="13">
    <original>I</original>
    <variation>A</variation>
    <location>
        <position position="378"/>
    </location>
</feature>
<feature type="mutagenesis site" description="In dnaB19; impairs chromosome replication initiation, origin region no longer associates with cell membrane at 45 degrees Celsius. In dnaBII; required only for chromosome replication." evidence="11 12 16">
    <original>A</original>
    <variation>T</variation>
    <location>
        <position position="379"/>
    </location>
</feature>
<feature type="mutagenesis site" description="Improved binding of phiX174 ssDNA, greatly increased oligomerization." evidence="13">
    <original>W</original>
    <variation>A</variation>
    <location>
        <position position="382"/>
    </location>
</feature>
<name>DNAB_BACSU</name>
<dbReference type="EMBL" id="M15183">
    <property type="protein sequence ID" value="AAA22404.1"/>
    <property type="molecule type" value="Genomic_DNA"/>
</dbReference>
<dbReference type="EMBL" id="X04963">
    <property type="status" value="NOT_ANNOTATED_CDS"/>
    <property type="molecule type" value="Genomic_DNA"/>
</dbReference>
<dbReference type="EMBL" id="Z75208">
    <property type="protein sequence ID" value="CAA99604.1"/>
    <property type="molecule type" value="Genomic_DNA"/>
</dbReference>
<dbReference type="EMBL" id="AF008220">
    <property type="protein sequence ID" value="AAC00358.1"/>
    <property type="molecule type" value="Genomic_DNA"/>
</dbReference>
<dbReference type="EMBL" id="AL009126">
    <property type="protein sequence ID" value="CAB14859.1"/>
    <property type="molecule type" value="Genomic_DNA"/>
</dbReference>
<dbReference type="PIR" id="B26580">
    <property type="entry name" value="B26580"/>
</dbReference>
<dbReference type="RefSeq" id="NP_390777.1">
    <property type="nucleotide sequence ID" value="NC_000964.3"/>
</dbReference>
<dbReference type="RefSeq" id="WP_003229464.1">
    <property type="nucleotide sequence ID" value="NZ_OZ025638.1"/>
</dbReference>
<dbReference type="SMR" id="P07908"/>
<dbReference type="FunCoup" id="P07908">
    <property type="interactions" value="49"/>
</dbReference>
<dbReference type="IntAct" id="P07908">
    <property type="interactions" value="4"/>
</dbReference>
<dbReference type="STRING" id="224308.BSU28990"/>
<dbReference type="PaxDb" id="224308-BSU28990"/>
<dbReference type="EnsemblBacteria" id="CAB14859">
    <property type="protein sequence ID" value="CAB14859"/>
    <property type="gene ID" value="BSU_28990"/>
</dbReference>
<dbReference type="GeneID" id="937396"/>
<dbReference type="KEGG" id="bsu:BSU28990"/>
<dbReference type="PATRIC" id="fig|224308.179.peg.3148"/>
<dbReference type="eggNOG" id="COG3611">
    <property type="taxonomic scope" value="Bacteria"/>
</dbReference>
<dbReference type="InParanoid" id="P07908"/>
<dbReference type="OrthoDB" id="2082007at2"/>
<dbReference type="PhylomeDB" id="P07908"/>
<dbReference type="BioCyc" id="BSUB:BSU28990-MONOMER"/>
<dbReference type="Proteomes" id="UP000001570">
    <property type="component" value="Chromosome"/>
</dbReference>
<dbReference type="GO" id="GO:0005737">
    <property type="term" value="C:cytoplasm"/>
    <property type="evidence" value="ECO:0007669"/>
    <property type="project" value="UniProtKB-SubCell"/>
</dbReference>
<dbReference type="GO" id="GO:1990077">
    <property type="term" value="C:primosome complex"/>
    <property type="evidence" value="ECO:0007669"/>
    <property type="project" value="UniProtKB-KW"/>
</dbReference>
<dbReference type="GO" id="GO:0005524">
    <property type="term" value="F:ATP binding"/>
    <property type="evidence" value="ECO:0007669"/>
    <property type="project" value="UniProtKB-KW"/>
</dbReference>
<dbReference type="GO" id="GO:0003677">
    <property type="term" value="F:DNA binding"/>
    <property type="evidence" value="ECO:0007669"/>
    <property type="project" value="UniProtKB-KW"/>
</dbReference>
<dbReference type="GO" id="GO:0006260">
    <property type="term" value="P:DNA replication"/>
    <property type="evidence" value="ECO:0000315"/>
    <property type="project" value="UniProtKB"/>
</dbReference>
<dbReference type="GO" id="GO:0006269">
    <property type="term" value="P:DNA replication, synthesis of primer"/>
    <property type="evidence" value="ECO:0007669"/>
    <property type="project" value="UniProtKB-KW"/>
</dbReference>
<dbReference type="Gene3D" id="1.10.10.630">
    <property type="entry name" value="DnaD domain-like"/>
    <property type="match status" value="1"/>
</dbReference>
<dbReference type="InterPro" id="IPR034829">
    <property type="entry name" value="DnaD-like_sf"/>
</dbReference>
<dbReference type="InterPro" id="IPR006343">
    <property type="entry name" value="DnaD_dom"/>
</dbReference>
<dbReference type="Pfam" id="PF07261">
    <property type="entry name" value="DnaB_2"/>
    <property type="match status" value="1"/>
</dbReference>
<evidence type="ECO:0000256" key="1">
    <source>
        <dbReference type="SAM" id="MobiDB-lite"/>
    </source>
</evidence>
<evidence type="ECO:0000269" key="2">
    <source>
    </source>
</evidence>
<evidence type="ECO:0000269" key="3">
    <source>
    </source>
</evidence>
<evidence type="ECO:0000269" key="4">
    <source>
    </source>
</evidence>
<evidence type="ECO:0000269" key="5">
    <source>
    </source>
</evidence>
<evidence type="ECO:0000269" key="6">
    <source>
    </source>
</evidence>
<evidence type="ECO:0000269" key="7">
    <source>
    </source>
</evidence>
<evidence type="ECO:0000269" key="8">
    <source>
    </source>
</evidence>
<evidence type="ECO:0000269" key="9">
    <source>
    </source>
</evidence>
<evidence type="ECO:0000269" key="10">
    <source>
    </source>
</evidence>
<evidence type="ECO:0000269" key="11">
    <source>
    </source>
</evidence>
<evidence type="ECO:0000269" key="12">
    <source>
    </source>
</evidence>
<evidence type="ECO:0000269" key="13">
    <source>
    </source>
</evidence>
<evidence type="ECO:0000269" key="14">
    <source>
    </source>
</evidence>
<evidence type="ECO:0000269" key="15">
    <source>
    </source>
</evidence>
<evidence type="ECO:0000269" key="16">
    <source>
    </source>
</evidence>
<evidence type="ECO:0000303" key="17">
    <source>
    </source>
</evidence>
<evidence type="ECO:0000303" key="18">
    <source>
    </source>
</evidence>
<evidence type="ECO:0000303" key="19">
    <source>
    </source>
</evidence>
<evidence type="ECO:0000303" key="20">
    <source>
    </source>
</evidence>
<evidence type="ECO:0000303" key="21">
    <source>
    </source>
</evidence>
<evidence type="ECO:0000305" key="22">
    <source>
    </source>
</evidence>
<evidence type="ECO:0000305" key="23">
    <source>
    </source>
</evidence>
<accession>P07908</accession>
<sequence length="472" mass="54890">MADYWKDVLPVDPYVVKSRSMLQDIDRQIITQLYQPLIGPVAFSLYMTLWGELEQNRLWGGESTHRQLMGMTQSNLKTIHQEQGKLEGIGLLKVYMKESERQERLFIYELLPPLRPNEFFEDGMLNVFLYNRVGKTKYQQLKQFFTHPAISEDAKDITRPFNHAFESLQPSEWKLTSDMEETVRLAEGSEYTSVGQSPSYTITEDVFDFDLFLAGLSETMIPRKAMTQQVRDTIKKLSYLYGIDPLQMQNVVMSAIDERDVITTEALRKAASDWYQIERNGQLPDLVEKTQPVHLREGEQPAEEDSLDGKLIALLEAISPKKLLQDIADGTEPSKADLKIIEEIMFEQKLEPGVTNVLIYYVMLKTDMKLSKNYIQKIASHWARKKVKTVREAMKLAIEENRQYLEWAEGKTKSSKRNQKVIREEKLPDWMTEKETASDSESGQQKLHPQDLEEQKKKMMEEMQKLKKYSAY</sequence>
<protein>
    <recommendedName>
        <fullName evidence="20">Replicative helicase loading/DNA remodeling protein DnaB</fullName>
    </recommendedName>
    <alternativeName>
        <fullName evidence="19">Replication initiation and membrane attachment protein</fullName>
    </alternativeName>
    <alternativeName>
        <fullName evidence="17">Replicative helicase loader DnaB</fullName>
    </alternativeName>
</protein>
<comment type="function">
    <text evidence="4 5 6 8 9 11 12 13 15 16">Helps DnaI load the DnaC replicative helicase onto single-stranded (ss)DNA (PubMed:12718886). During DNA replication from the origin of replication (oriC) in the DNA replisome, DnaD is required after DnaA, before DnaB and before subsequent helicase DnaC loading (PubMed:15186423, PubMed:19968790). Component of the replication restart primosome, which reloads the replicative helicase on sites other than oriC (PubMed:11585815). DnaB, DnaD and DnaI may also be required for a PriA-independent pathway of replication fork restart (PubMed:11679082). DnaB and DnaD work together to allow DnaB access to ssDNA (PubMed:15686560). DNA replication at oriC might originate on the inner face of the cell membrane; DnaB is essential for both replication initiation and cell membrane attachment of the origin region of the chromosome and plasmids (PubMed:6771760, PubMed:3027671, PubMed:3027697). Weakly binds ssDNA (PubMed:11585815, PubMed:15686560, PubMed:32817095), preferentially binds double-stranded (ds)DNA (PubMed:32817095), and replication fork-like substrates (PubMed:11585815). Remodels DNA, laterally compacts supercoiled plasmid and linear DNA, forms beads along the dsDNA (PubMed:16002087). Together DnaB and DnaD form bipolar complexes on plasmid DNA (PubMed:16002087). DnaB and DnaD are also required to load helicase on the repN plasmid origin of replication (oriN) (PubMed:36416272).</text>
</comment>
<comment type="subunit">
    <text evidence="3 5 7 8 9 10 13 14 15">Homotetramer (PubMed:11585815, PubMed:12718886, PubMed:16002087, PubMed:20071750, PubMed:32817095). Also forms higher-order oligomers, can be induced by some ssDNA (PubMed:16002087, PubMed:32817095). The DNA replisome assembles sequentially on oriC in this order; DnaA, DnaD, DnaB, DnaI-DnaC helicase (PubMed:19968790). In atomic force microscopy forms a square with a small central hole (PubMed:16002087). Part of the replication restart primosome which assembles in this order; PriA, DnaD then DnaB. The preferred DNA substrate mimics an arrested DNA replication fork with unreplicated lagging strand (PubMed:11585815). Interacts with DnaC, but probably not as a tetramer (PubMed:12718886). Interacts with DnaD (PubMed:15186423, PubMed:15686560, PubMed:36416272) but no interaction with PriA was seen (PubMed:15686560). Interacts with cell cycle regulator CcrZ (PubMed:35576203).</text>
</comment>
<comment type="subcellular location">
    <subcellularLocation>
        <location evidence="2 10">Cytoplasm</location>
    </subcellularLocation>
    <subcellularLocation>
        <location evidence="6 10">Cell membrane</location>
    </subcellularLocation>
    <text evidence="2 10">Forms foci near both cell poles and in the middle of cells (PubMed:10844689). DnaB interacts with oriC downstream of dnaA, truncated DnaB is specifically depleted at oriC and not other sites in the genome (PubMed:20071750).</text>
</comment>
<comment type="induction">
    <text evidence="10">Transcribed at constant levels during exponential growth (PubMed:20071750). Present in all growth phases (at protein level) (PubMed:20071750).</text>
</comment>
<comment type="domain">
    <text evidence="10 13 22">Bind ssDNA via the N-terminus (residues 1-300), which also mediates tetramerization (PubMed:20071750). A region in the C-terminus (residues 365-428) also binds ssDNA, dsDNA and is responsible for DNA-mediated oligomerization (PubMed:20071750). Has 3 domains with homology to DnaD called DDBH1 and DDBH2 (DnaD DnaB Homology 1 and 2) followed by a short positively charged region and a probable C-terminal alpha-helix (PubMed:20587500). Removal of residues 429-472 increases dsDNA and some ssDNA binding, while removal of 312-472 prevents all DNA binding (PubMed:32817095).</text>
</comment>
<comment type="PTM">
    <text evidence="10">In early growth phase only full-length protein is detected, during late growth and stationary phase full-length and C-terminally truncated proteins are seen (at protein level) (PubMed:20071750). Truncated protein is only seen in cytoplasmic fractions (PubMed:20071750).</text>
</comment>
<comment type="disruption phenotype">
    <text evidence="9">Essential, it cannot be deleted; in depletion experiments DNA replication slows as soon as the protein is degraded and replication stops by 1 hour (PubMed:19968790).</text>
</comment>
<comment type="miscellaneous">
    <text evidence="11">The dna-1 (dnaBI) and dnaB-19 (dnaBII) mutants show different characteristics for replication and membrane binding of plasmid pUB110. DnaBI is essential for both chromosome and pUB110 replication, whereas dnaBII is necessary only for chromosome replication.</text>
</comment>
<comment type="similarity">
    <text evidence="22">Belongs to the DnaB/DnaD family.</text>
</comment>
<gene>
    <name evidence="18" type="primary">dnaB</name>
    <name type="ordered locus">BSU28990</name>
</gene>
<reference key="1">
    <citation type="journal article" date="1986" name="Nucleic Acids Res.">
        <title>Nucleotide sequence and organization of dnaB gene and neighbouring genes on the Bacillus subtilis chromosome.</title>
        <authorList>
            <person name="Ogasawara N."/>
            <person name="Moriya S."/>
            <person name="Mazza P.G."/>
            <person name="Yoshikawa H."/>
        </authorList>
    </citation>
    <scope>NUCLEOTIDE SEQUENCE [GENOMIC DNA]</scope>
    <scope>FUNCTION</scope>
    <scope>MUTAGENESIS OF ASP-122 AND ALA-379</scope>
    <source>
        <strain>168</strain>
    </source>
</reference>
<reference key="2">
    <citation type="journal article" date="1987" name="Proc. Natl. Acad. Sci. U.S.A.">
        <title>Nucleotide sequence of Bacillus subtilis dnaB: a gene essential for DNA replication initiation and membrane attachment.</title>
        <authorList>
            <person name="Hoshino T."/>
            <person name="McKenzie T."/>
            <person name="Schmidt S."/>
            <person name="Tanaka T."/>
            <person name="Sueoka N."/>
        </authorList>
    </citation>
    <scope>NUCLEOTIDE SEQUENCE [GENOMIC DNA]</scope>
    <scope>FUNCTION</scope>
    <scope>MUTAGENESIS OF PRO-113 AND ALA-379</scope>
    <source>
        <strain>168 / PY79</strain>
    </source>
</reference>
<reference key="3">
    <citation type="journal article" date="1996" name="Microbiology">
        <title>The dnaB-pheA (256 degrees-240 degrees) region of the Bacillus subtilis chromosome containing genes responsible for stress responses, the utilization of plant cell walls and primary metabolism.</title>
        <authorList>
            <person name="Wipat A."/>
            <person name="Carter N."/>
            <person name="Brignell C.S."/>
            <person name="Guy J.B."/>
            <person name="Piper K."/>
            <person name="Sanders J."/>
            <person name="Emmerson P.T."/>
            <person name="Harwood C.R."/>
        </authorList>
    </citation>
    <scope>NUCLEOTIDE SEQUENCE [GENOMIC DNA]</scope>
    <source>
        <strain>168</strain>
    </source>
</reference>
<reference key="4">
    <citation type="journal article" date="1997" name="Microbiology">
        <title>Sequencing and functional annotation of the Bacillus subtilis genes in the 200 kb rrnB-dnaB region.</title>
        <authorList>
            <person name="Lapidus A."/>
            <person name="Galleron N."/>
            <person name="Sorokin A."/>
            <person name="Ehrlich S.D."/>
        </authorList>
    </citation>
    <scope>NUCLEOTIDE SEQUENCE [GENOMIC DNA]</scope>
    <source>
        <strain>168</strain>
    </source>
</reference>
<reference key="5">
    <citation type="journal article" date="1997" name="Nature">
        <title>The complete genome sequence of the Gram-positive bacterium Bacillus subtilis.</title>
        <authorList>
            <person name="Kunst F."/>
            <person name="Ogasawara N."/>
            <person name="Moszer I."/>
            <person name="Albertini A.M."/>
            <person name="Alloni G."/>
            <person name="Azevedo V."/>
            <person name="Bertero M.G."/>
            <person name="Bessieres P."/>
            <person name="Bolotin A."/>
            <person name="Borchert S."/>
            <person name="Borriss R."/>
            <person name="Boursier L."/>
            <person name="Brans A."/>
            <person name="Braun M."/>
            <person name="Brignell S.C."/>
            <person name="Bron S."/>
            <person name="Brouillet S."/>
            <person name="Bruschi C.V."/>
            <person name="Caldwell B."/>
            <person name="Capuano V."/>
            <person name="Carter N.M."/>
            <person name="Choi S.-K."/>
            <person name="Codani J.-J."/>
            <person name="Connerton I.F."/>
            <person name="Cummings N.J."/>
            <person name="Daniel R.A."/>
            <person name="Denizot F."/>
            <person name="Devine K.M."/>
            <person name="Duesterhoeft A."/>
            <person name="Ehrlich S.D."/>
            <person name="Emmerson P.T."/>
            <person name="Entian K.-D."/>
            <person name="Errington J."/>
            <person name="Fabret C."/>
            <person name="Ferrari E."/>
            <person name="Foulger D."/>
            <person name="Fritz C."/>
            <person name="Fujita M."/>
            <person name="Fujita Y."/>
            <person name="Fuma S."/>
            <person name="Galizzi A."/>
            <person name="Galleron N."/>
            <person name="Ghim S.-Y."/>
            <person name="Glaser P."/>
            <person name="Goffeau A."/>
            <person name="Golightly E.J."/>
            <person name="Grandi G."/>
            <person name="Guiseppi G."/>
            <person name="Guy B.J."/>
            <person name="Haga K."/>
            <person name="Haiech J."/>
            <person name="Harwood C.R."/>
            <person name="Henaut A."/>
            <person name="Hilbert H."/>
            <person name="Holsappel S."/>
            <person name="Hosono S."/>
            <person name="Hullo M.-F."/>
            <person name="Itaya M."/>
            <person name="Jones L.-M."/>
            <person name="Joris B."/>
            <person name="Karamata D."/>
            <person name="Kasahara Y."/>
            <person name="Klaerr-Blanchard M."/>
            <person name="Klein C."/>
            <person name="Kobayashi Y."/>
            <person name="Koetter P."/>
            <person name="Koningstein G."/>
            <person name="Krogh S."/>
            <person name="Kumano M."/>
            <person name="Kurita K."/>
            <person name="Lapidus A."/>
            <person name="Lardinois S."/>
            <person name="Lauber J."/>
            <person name="Lazarevic V."/>
            <person name="Lee S.-M."/>
            <person name="Levine A."/>
            <person name="Liu H."/>
            <person name="Masuda S."/>
            <person name="Mauel C."/>
            <person name="Medigue C."/>
            <person name="Medina N."/>
            <person name="Mellado R.P."/>
            <person name="Mizuno M."/>
            <person name="Moestl D."/>
            <person name="Nakai S."/>
            <person name="Noback M."/>
            <person name="Noone D."/>
            <person name="O'Reilly M."/>
            <person name="Ogawa K."/>
            <person name="Ogiwara A."/>
            <person name="Oudega B."/>
            <person name="Park S.-H."/>
            <person name="Parro V."/>
            <person name="Pohl T.M."/>
            <person name="Portetelle D."/>
            <person name="Porwollik S."/>
            <person name="Prescott A.M."/>
            <person name="Presecan E."/>
            <person name="Pujic P."/>
            <person name="Purnelle B."/>
            <person name="Rapoport G."/>
            <person name="Rey M."/>
            <person name="Reynolds S."/>
            <person name="Rieger M."/>
            <person name="Rivolta C."/>
            <person name="Rocha E."/>
            <person name="Roche B."/>
            <person name="Rose M."/>
            <person name="Sadaie Y."/>
            <person name="Sato T."/>
            <person name="Scanlan E."/>
            <person name="Schleich S."/>
            <person name="Schroeter R."/>
            <person name="Scoffone F."/>
            <person name="Sekiguchi J."/>
            <person name="Sekowska A."/>
            <person name="Seror S.J."/>
            <person name="Serror P."/>
            <person name="Shin B.-S."/>
            <person name="Soldo B."/>
            <person name="Sorokin A."/>
            <person name="Tacconi E."/>
            <person name="Takagi T."/>
            <person name="Takahashi H."/>
            <person name="Takemaru K."/>
            <person name="Takeuchi M."/>
            <person name="Tamakoshi A."/>
            <person name="Tanaka T."/>
            <person name="Terpstra P."/>
            <person name="Tognoni A."/>
            <person name="Tosato V."/>
            <person name="Uchiyama S."/>
            <person name="Vandenbol M."/>
            <person name="Vannier F."/>
            <person name="Vassarotti A."/>
            <person name="Viari A."/>
            <person name="Wambutt R."/>
            <person name="Wedler E."/>
            <person name="Wedler H."/>
            <person name="Weitzenegger T."/>
            <person name="Winters P."/>
            <person name="Wipat A."/>
            <person name="Yamamoto H."/>
            <person name="Yamane K."/>
            <person name="Yasumoto K."/>
            <person name="Yata K."/>
            <person name="Yoshida K."/>
            <person name="Yoshikawa H.-F."/>
            <person name="Zumstein E."/>
            <person name="Yoshikawa H."/>
            <person name="Danchin A."/>
        </authorList>
    </citation>
    <scope>NUCLEOTIDE SEQUENCE [LARGE SCALE GENOMIC DNA]</scope>
    <source>
        <strain>168</strain>
    </source>
</reference>
<reference key="6">
    <citation type="journal article" date="1980" name="Proc. Natl. Acad. Sci. U.S.A.">
        <title>DNA-membrane association is necessary for initiation of chromosomal and plasmid replication in Bacillus subtilis.</title>
        <authorList>
            <person name="Winston S."/>
            <person name="Sueoka N."/>
        </authorList>
    </citation>
    <scope>FUNCTION IN MEMBRANE ATTACHMENT OF ORIGIN REGION</scope>
    <scope>MUTAGENESIS OF PRO-113 AND ALA-379</scope>
    <source>
        <strain>168</strain>
    </source>
</reference>
<reference key="7">
    <citation type="journal article" date="2000" name="Mol. Microbiol.">
        <title>Subcellular localization of Dna-initiation proteins of Bacillus subtilis: evidence that chromosome replication begins at either edge of the nucleoids.</title>
        <authorList>
            <person name="Imai Y."/>
            <person name="Ogasawara N."/>
            <person name="Ishigo-Oka D."/>
            <person name="Kadoya R."/>
            <person name="Daito T."/>
            <person name="Moriya S."/>
        </authorList>
    </citation>
    <scope>SUBCELLULAR LOCATION</scope>
    <source>
        <strain>CRK6000</strain>
    </source>
</reference>
<reference key="8">
    <citation type="journal article" date="2001" name="J. Biol. Chem.">
        <title>Early steps of Bacillus subtilis primosome assembly.</title>
        <authorList>
            <person name="Marsin S."/>
            <person name="McGovern S."/>
            <person name="Ehrlich S.D."/>
            <person name="Bruand C."/>
            <person name="Polard P."/>
        </authorList>
    </citation>
    <scope>FUNCTION</scope>
    <scope>SUBUNIT</scope>
    <scope>DNA-BINDING</scope>
    <source>
        <strain>168</strain>
    </source>
</reference>
<reference key="9">
    <citation type="journal article" date="2001" name="Mol. Microbiol.">
        <title>DnaB, DnaD and DnaI proteins are components of the Bacillus subtilis replication restart primosome.</title>
        <authorList>
            <person name="Bruand C."/>
            <person name="Farache M."/>
            <person name="McGovern S."/>
            <person name="Ehrlich S.D."/>
            <person name="Polard P."/>
        </authorList>
    </citation>
    <scope>FUNCTION</scope>
    <scope>MUTAGENESIS OF SER-371</scope>
</reference>
<reference key="10">
    <citation type="journal article" date="2003" name="Mol. Cell">
        <title>A two-protein strategy for the functional loading of a cellular replicative DNA helicase.</title>
        <authorList>
            <person name="Velten M."/>
            <person name="McGovern S."/>
            <person name="Marsin S."/>
            <person name="Ehrlich S.D."/>
            <person name="Noirot P."/>
            <person name="Polard P."/>
        </authorList>
    </citation>
    <scope>FUNCTION</scope>
    <scope>SUBUNIT</scope>
    <scope>INTERACTION WITH DNAC</scope>
    <scope>MUTAGENESIS OF SER-371</scope>
</reference>
<reference key="11">
    <citation type="journal article" date="2004" name="Mol. Microbiol.">
        <title>Control of DNA replication initiation by recruitment of an essential initiation protein to the membrane of Bacillus subtilis.</title>
        <authorList>
            <person name="Rokop M.E."/>
            <person name="Auchtung J.M."/>
            <person name="Grossman A.D."/>
        </authorList>
    </citation>
    <scope>SUBUNIT</scope>
    <scope>INTERACTION WITH DNAD</scope>
    <scope>SUBCELLULAR LOCATION</scope>
    <scope>MUTAGENESIS OF LYS-85 AND SER-371</scope>
</reference>
<reference key="12">
    <citation type="journal article" date="2005" name="Mol. Microbiol.">
        <title>Functional interplay between the Bacillus subtilis DnaD and DnaB proteins essential for initiation and re-initiation of DNA replication.</title>
        <authorList>
            <person name="Bruand C."/>
            <person name="Velten M."/>
            <person name="McGovern S."/>
            <person name="Marsin S."/>
            <person name="Serena C."/>
            <person name="Ehrlich S.D."/>
            <person name="Polard P."/>
        </authorList>
    </citation>
    <scope>FUNCTION</scope>
    <scope>SUBUNIT</scope>
    <scope>INTERACTION WITH DNAD</scope>
    <scope>DNA-BINDING</scope>
    <scope>MUTAGENESIS OF SER-371</scope>
    <source>
        <strain>168</strain>
    </source>
</reference>
<reference key="13">
    <citation type="journal article" date="2005" name="J. Mol. Biol.">
        <title>The Bacillus subtilis DnaD and DnaB proteins exhibit different DNA remodelling activities.</title>
        <authorList>
            <person name="Zhang W."/>
            <person name="Carneiro M.J."/>
            <person name="Turner I.J."/>
            <person name="Allen S."/>
            <person name="Roberts C.J."/>
            <person name="Soultanas P."/>
        </authorList>
    </citation>
    <scope>FUNCTION</scope>
    <scope>SUBUNIT</scope>
    <source>
        <strain>168 / EMG50</strain>
    </source>
</reference>
<reference key="14">
    <citation type="journal article" date="2010" name="Mol. Microbiol.">
        <title>Ordered association of helicase loader proteins with the Bacillus subtilis origin of replication in vivo.</title>
        <authorList>
            <person name="Smits W.K."/>
            <person name="Goranov A.I."/>
            <person name="Grossman A.D."/>
        </authorList>
    </citation>
    <scope>FUNCTION</scope>
    <scope>DNA REPLISOME ASSEMBLY</scope>
    <scope>DISRUPTION PHENOTYPE</scope>
    <scope>MUTAGENESIS OF LYS-85</scope>
</reference>
<reference key="15">
    <citation type="journal article" date="2010" name="Nucleic Acids Res.">
        <title>DnaB proteolysis in vivo regulates oligomerization and its localization at oriC in Bacillus subtilis.</title>
        <authorList>
            <person name="Grainger W.H."/>
            <person name="Machon C."/>
            <person name="Scott D.J."/>
            <person name="Soultanas P."/>
        </authorList>
    </citation>
    <scope>SUBUNIT</scope>
    <scope>SUBCELLULAR LOCATION</scope>
    <scope>INDUCTION</scope>
    <scope>DOMAIN</scope>
    <scope>PROTEOLYTIC PROCESSING</scope>
    <scope>DNA-BINDING</scope>
    <source>
        <strain>168</strain>
    </source>
</reference>
<reference key="16">
    <citation type="journal article" date="2010" name="Nucleic Acids Res.">
        <title>When simple sequence comparison fails: the cryptic case of the shared domains of the bacterial replication initiation proteins DnaB and DnaD.</title>
        <authorList>
            <person name="Marston F.Y."/>
            <person name="Grainger W.H."/>
            <person name="Smits W.K."/>
            <person name="Hopcroft N.H."/>
            <person name="Green M."/>
            <person name="Hounslow A.M."/>
            <person name="Grossman A.D."/>
            <person name="Craven C.J."/>
            <person name="Soultanas P."/>
        </authorList>
    </citation>
    <scope>SIMILARITY WITH DNAD</scope>
    <scope>DOMAIN</scope>
</reference>
<reference key="17">
    <citation type="journal article" date="2020" name="J. Bacteriol.">
        <title>Regulation of DNA Binding and High-Order Oligomerization of the DnaB Helicase Loader.</title>
        <authorList>
            <person name="Matthews L.A."/>
            <person name="Simmons L.A."/>
        </authorList>
    </citation>
    <scope>SUBUNIT</scope>
    <scope>DOMAIN</scope>
    <scope>DNA-BINDING</scope>
    <scope>MUTAGENESIS OF TYR-374; ILE-378 AND TRP-382</scope>
    <source>
        <strain>168 / PY79</strain>
    </source>
</reference>
<reference key="18">
    <citation type="journal article" date="2022" name="PLoS Genet.">
        <title>Structure and kinase activity of bacterial cell cycle regulator CcrZ.</title>
        <authorList>
            <person name="Wozniak K.J."/>
            <person name="Burby P.E."/>
            <person name="Nandakumar J."/>
            <person name="Simmons L.A."/>
        </authorList>
    </citation>
    <scope>INTERACTION WITH CCRZ</scope>
    <source>
        <strain evidence="21">168 / PY79</strain>
    </source>
</reference>
<reference key="19">
    <citation type="journal article" date="2023" name="Nucleic Acids Res.">
        <title>SirA inhibits the essential DnaA:DnaD interaction to block helicase recruitment during Bacillus subtilis sporulation.</title>
        <authorList>
            <person name="Winterhalter C."/>
            <person name="Stevens D."/>
            <person name="Fenyk S."/>
            <person name="Pelliciari S."/>
            <person name="Marchand E."/>
            <person name="Soultanas P."/>
            <person name="Ilangovan A."/>
            <person name="Murray H."/>
        </authorList>
    </citation>
    <scope>FUNCTION</scope>
    <scope>SUBUNIT</scope>
    <scope>INTERACTION WITH DNAD</scope>
</reference>
<keyword id="KW-1003">Cell membrane</keyword>
<keyword id="KW-0963">Cytoplasm</keyword>
<keyword id="KW-0235">DNA replication</keyword>
<keyword id="KW-0238">DNA-binding</keyword>
<keyword id="KW-0472">Membrane</keyword>
<keyword id="KW-0639">Primosome</keyword>
<keyword id="KW-1185">Reference proteome</keyword>
<organism>
    <name type="scientific">Bacillus subtilis (strain 168)</name>
    <dbReference type="NCBI Taxonomy" id="224308"/>
    <lineage>
        <taxon>Bacteria</taxon>
        <taxon>Bacillati</taxon>
        <taxon>Bacillota</taxon>
        <taxon>Bacilli</taxon>
        <taxon>Bacillales</taxon>
        <taxon>Bacillaceae</taxon>
        <taxon>Bacillus</taxon>
    </lineage>
</organism>
<proteinExistence type="evidence at protein level"/>